<keyword id="KW-0025">Alternative splicing</keyword>
<keyword id="KW-1015">Disulfide bond</keyword>
<keyword id="KW-0325">Glycoprotein</keyword>
<keyword id="KW-0328">Glycosyltransferase</keyword>
<keyword id="KW-0333">Golgi apparatus</keyword>
<keyword id="KW-0464">Manganese</keyword>
<keyword id="KW-0472">Membrane</keyword>
<keyword id="KW-0479">Metal-binding</keyword>
<keyword id="KW-1267">Proteomics identification</keyword>
<keyword id="KW-1185">Reference proteome</keyword>
<keyword id="KW-0735">Signal-anchor</keyword>
<keyword id="KW-0808">Transferase</keyword>
<keyword id="KW-0812">Transmembrane</keyword>
<keyword id="KW-1133">Transmembrane helix</keyword>
<accession>O60909</accession>
<accession>B3KTP0</accession>
<accession>B4DE14</accession>
<accession>D3DPY6</accession>
<accession>D3DPY7</accession>
<accession>O60511</accession>
<accession>Q4V9L9</accession>
<accession>Q5T4X5</accession>
<accession>Q5T4Y5</accession>
<accession>Q9BUP6</accession>
<accession>Q9NSY7</accession>
<feature type="chain" id="PRO_0000080533" description="Beta-1,4-galactosyltransferase 2">
    <location>
        <begin position="1"/>
        <end position="372"/>
    </location>
</feature>
<feature type="topological domain" description="Cytoplasmic" evidence="2">
    <location>
        <begin position="1"/>
        <end position="15"/>
    </location>
</feature>
<feature type="transmembrane region" description="Helical; Signal-anchor for type II membrane protein" evidence="2">
    <location>
        <begin position="16"/>
        <end position="36"/>
    </location>
</feature>
<feature type="topological domain" description="Lumenal" evidence="2">
    <location>
        <begin position="37"/>
        <end position="372"/>
    </location>
</feature>
<feature type="region of interest" description="Disordered" evidence="3">
    <location>
        <begin position="56"/>
        <end position="97"/>
    </location>
</feature>
<feature type="compositionally biased region" description="Polar residues" evidence="3">
    <location>
        <begin position="66"/>
        <end position="78"/>
    </location>
</feature>
<feature type="binding site" evidence="1">
    <location>
        <begin position="150"/>
        <end position="154"/>
    </location>
    <ligand>
        <name>UDP-alpha-D-galactose</name>
        <dbReference type="ChEBI" id="CHEBI:66914"/>
    </ligand>
</feature>
<feature type="binding site" evidence="1">
    <location>
        <begin position="189"/>
        <end position="191"/>
    </location>
    <ligand>
        <name>UDP-alpha-D-galactose</name>
        <dbReference type="ChEBI" id="CHEBI:66914"/>
    </ligand>
</feature>
<feature type="binding site" evidence="1">
    <location>
        <begin position="217"/>
        <end position="218"/>
    </location>
    <ligand>
        <name>UDP-alpha-D-galactose</name>
        <dbReference type="ChEBI" id="CHEBI:66914"/>
    </ligand>
</feature>
<feature type="binding site" evidence="1">
    <location>
        <position position="218"/>
    </location>
    <ligand>
        <name>Mn(2+)</name>
        <dbReference type="ChEBI" id="CHEBI:29035"/>
    </ligand>
</feature>
<feature type="binding site" evidence="1">
    <location>
        <position position="278"/>
    </location>
    <ligand>
        <name>UDP-alpha-D-galactose</name>
        <dbReference type="ChEBI" id="CHEBI:66914"/>
    </ligand>
</feature>
<feature type="binding site" evidence="1">
    <location>
        <begin position="280"/>
        <end position="283"/>
    </location>
    <ligand>
        <name>N-acetyl-D-glucosamine</name>
        <dbReference type="ChEBI" id="CHEBI:506227"/>
    </ligand>
</feature>
<feature type="binding site" evidence="1">
    <location>
        <begin position="311"/>
        <end position="313"/>
    </location>
    <ligand>
        <name>UDP-alpha-D-galactose</name>
        <dbReference type="ChEBI" id="CHEBI:66914"/>
    </ligand>
</feature>
<feature type="binding site" evidence="1">
    <location>
        <position position="311"/>
    </location>
    <ligand>
        <name>Mn(2+)</name>
        <dbReference type="ChEBI" id="CHEBI:29035"/>
    </ligand>
</feature>
<feature type="binding site" evidence="1">
    <location>
        <position position="323"/>
    </location>
    <ligand>
        <name>N-acetyl-D-glucosamine</name>
        <dbReference type="ChEBI" id="CHEBI:506227"/>
    </ligand>
</feature>
<feature type="glycosylation site" description="N-linked (GlcNAc...) asparagine" evidence="2">
    <location>
        <position position="66"/>
    </location>
</feature>
<feature type="glycosylation site" description="N-linked (GlcNAc...) asparagine" evidence="2">
    <location>
        <position position="71"/>
    </location>
</feature>
<feature type="glycosylation site" description="N-linked (GlcNAc...) asparagine" evidence="2">
    <location>
        <position position="357"/>
    </location>
</feature>
<feature type="disulfide bond" evidence="1">
    <location>
        <begin position="97"/>
        <end position="139"/>
    </location>
</feature>
<feature type="disulfide bond" evidence="1">
    <location>
        <begin position="211"/>
        <end position="230"/>
    </location>
</feature>
<feature type="splice variant" id="VSP_014103" description="In isoform 2." evidence="9">
    <location>
        <begin position="1"/>
        <end position="118"/>
    </location>
</feature>
<feature type="splice variant" id="VSP_043010" description="In isoform 3." evidence="7">
    <original>M</original>
    <variation>MAVEVQEQWPCLPAAGCPGPLGGPVAACGM</variation>
    <location>
        <position position="1"/>
    </location>
</feature>
<feature type="splice variant" id="VSP_014104" description="In isoform 2." evidence="9">
    <original>E</original>
    <variation>MPSTQLLAAAAAAATAPGPTPPPLAPGSLRSPVPCPVPRLPRCHPVLTRHLVL</variation>
    <location>
        <position position="119"/>
    </location>
</feature>
<feature type="sequence variant" id="VAR_020487" description="In dbSNP:rs1859728." evidence="5">
    <original>Q</original>
    <variation>H</variation>
    <location>
        <position position="122"/>
    </location>
</feature>
<feature type="sequence variant" id="VAR_054021" description="In dbSNP:rs35904809.">
    <original>G</original>
    <variation>R</variation>
    <location>
        <position position="338"/>
    </location>
</feature>
<feature type="sequence conflict" description="In Ref. 2." evidence="9" ref="2">
    <original>S</original>
    <variation>TS</variation>
    <location>
        <position position="100"/>
    </location>
</feature>
<feature type="sequence conflict" description="In Ref. 2; AAC39733." evidence="9" ref="2">
    <original>P</original>
    <variation>S</variation>
    <location>
        <position position="136"/>
    </location>
</feature>
<feature type="sequence conflict" description="In Ref. 2; AAC39733." evidence="9" ref="2">
    <original>G</original>
    <variation>C</variation>
    <location>
        <position position="177"/>
    </location>
</feature>
<feature type="sequence conflict" description="In Ref. 2; AAC39733." evidence="9" ref="2">
    <original>KH</original>
    <variation>ND</variation>
    <location>
        <begin position="315"/>
        <end position="316"/>
    </location>
</feature>
<name>B4GT2_HUMAN</name>
<evidence type="ECO:0000250" key="1"/>
<evidence type="ECO:0000255" key="2"/>
<evidence type="ECO:0000256" key="3">
    <source>
        <dbReference type="SAM" id="MobiDB-lite"/>
    </source>
</evidence>
<evidence type="ECO:0000269" key="4">
    <source>
    </source>
</evidence>
<evidence type="ECO:0000269" key="5">
    <source>
    </source>
</evidence>
<evidence type="ECO:0000269" key="6">
    <source>
    </source>
</evidence>
<evidence type="ECO:0000303" key="7">
    <source>
    </source>
</evidence>
<evidence type="ECO:0000303" key="8">
    <source>
    </source>
</evidence>
<evidence type="ECO:0000305" key="9"/>
<evidence type="ECO:0000312" key="10">
    <source>
        <dbReference type="HGNC" id="HGNC:925"/>
    </source>
</evidence>
<comment type="function">
    <text evidence="6">Responsible for the synthesis of complex-type N-linked oligosaccharides in many glycoproteins as well as the carbohydrate moieties of glycolipids (PubMed:9405390). Can produce lactose (PubMed:9405390).</text>
</comment>
<comment type="catalytic activity">
    <reaction evidence="6">
        <text>D-glucose + UDP-alpha-D-galactose = lactose + UDP + H(+)</text>
        <dbReference type="Rhea" id="RHEA:12404"/>
        <dbReference type="ChEBI" id="CHEBI:4167"/>
        <dbReference type="ChEBI" id="CHEBI:15378"/>
        <dbReference type="ChEBI" id="CHEBI:17716"/>
        <dbReference type="ChEBI" id="CHEBI:58223"/>
        <dbReference type="ChEBI" id="CHEBI:66914"/>
        <dbReference type="EC" id="2.4.1.22"/>
    </reaction>
    <physiologicalReaction direction="left-to-right" evidence="6">
        <dbReference type="Rhea" id="RHEA:12405"/>
    </physiologicalReaction>
</comment>
<comment type="catalytic activity">
    <reaction evidence="6">
        <text>an N-acetyl-beta-D-glucosaminyl derivative + UDP-alpha-D-galactose = a beta-D-galactosyl-(1-&gt;4)-N-acetyl-beta-D-glucosaminyl derivative + UDP + H(+)</text>
        <dbReference type="Rhea" id="RHEA:22932"/>
        <dbReference type="ChEBI" id="CHEBI:15378"/>
        <dbReference type="ChEBI" id="CHEBI:58223"/>
        <dbReference type="ChEBI" id="CHEBI:61631"/>
        <dbReference type="ChEBI" id="CHEBI:66914"/>
        <dbReference type="ChEBI" id="CHEBI:133507"/>
        <dbReference type="EC" id="2.4.1.38"/>
    </reaction>
    <physiologicalReaction direction="left-to-right" evidence="6">
        <dbReference type="Rhea" id="RHEA:22933"/>
    </physiologicalReaction>
</comment>
<comment type="catalytic activity">
    <reaction evidence="4 6">
        <text>N-acetyl-D-glucosamine + UDP-alpha-D-galactose = beta-D-galactosyl-(1-&gt;4)-N-acetyl-D-glucosamine + UDP + H(+)</text>
        <dbReference type="Rhea" id="RHEA:17745"/>
        <dbReference type="ChEBI" id="CHEBI:15378"/>
        <dbReference type="ChEBI" id="CHEBI:58223"/>
        <dbReference type="ChEBI" id="CHEBI:60152"/>
        <dbReference type="ChEBI" id="CHEBI:66914"/>
        <dbReference type="ChEBI" id="CHEBI:506227"/>
        <dbReference type="EC" id="2.4.1.90"/>
    </reaction>
    <physiologicalReaction direction="left-to-right" evidence="6">
        <dbReference type="Rhea" id="RHEA:17746"/>
    </physiologicalReaction>
</comment>
<comment type="cofactor">
    <cofactor evidence="1">
        <name>Mn(2+)</name>
        <dbReference type="ChEBI" id="CHEBI:29035"/>
    </cofactor>
</comment>
<comment type="biophysicochemical properties">
    <kinetics>
        <KM evidence="4">71 uM for GlcNAc-B-S-pNP</KM>
        <KM evidence="6">0.011 mM for UDP-galactose</KM>
        <KM evidence="6">0.16 mM for benzyl-beta-D-GlcNAc</KM>
        <KM evidence="6">2.65 mM for D-GlcNAc</KM>
        <Vmax evidence="6">207.6 pmol/min/mg enzyme towards UDP-galactose</Vmax>
        <Vmax evidence="6">352.0 pmol/min/mg enzyme towards for benzyl-beta-D-GlcNAc</Vmax>
        <Vmax evidence="6">237.6 pmol/min/mg enzyme towards D-GlcNAc</Vmax>
    </kinetics>
</comment>
<comment type="pathway">
    <text>Protein modification; protein glycosylation.</text>
</comment>
<comment type="interaction">
    <interactant intactId="EBI-12261054">
        <id>O60909-2</id>
    </interactant>
    <interactant intactId="EBI-16439278">
        <id>Q6FHY5</id>
        <label>MEOX2</label>
    </interactant>
    <organismsDiffer>false</organismsDiffer>
    <experiments>3</experiments>
</comment>
<comment type="subcellular location">
    <subcellularLocation>
        <location>Golgi apparatus</location>
        <location>Golgi stack membrane</location>
        <topology>Single-pass type II membrane protein</topology>
    </subcellularLocation>
    <text>Trans cisternae of Golgi stack.</text>
</comment>
<comment type="alternative products">
    <event type="alternative splicing"/>
    <isoform>
        <id>O60909-1</id>
        <name>1</name>
        <sequence type="displayed"/>
    </isoform>
    <isoform>
        <id>O60909-2</id>
        <name>2</name>
        <sequence type="described" ref="VSP_014103 VSP_014104"/>
    </isoform>
    <isoform>
        <id>O60909-3</id>
        <name>3</name>
        <sequence type="described" ref="VSP_043010"/>
    </isoform>
</comment>
<comment type="tissue specificity">
    <text evidence="6">Weakly expressed in various tissues. Highest expression in prostate, testis, ovary, intestine, muscle, and in fetal brain.</text>
</comment>
<comment type="similarity">
    <text evidence="9">Belongs to the glycosyltransferase 7 family.</text>
</comment>
<comment type="online information" name="Functional Glycomics Gateway - GTase">
    <link uri="http://www.functionalglycomics.org/glycomics/molecule/jsp/glycoEnzyme/viewGlycoEnzyme.jsp?gbpId=gt_hum_437"/>
    <text>Beta-1,4-galactosyltransferase 2</text>
</comment>
<proteinExistence type="evidence at protein level"/>
<reference key="1">
    <citation type="journal article" date="1997" name="J. Biol. Chem.">
        <title>A family of human beta4-galactosyltransferases. Cloning and expression of two novel UDP-galactose:beta-n-acetylglucosamine beta1, 4-galactosyltransferases, beta4Gal-T2 and beta4Gal-T3.</title>
        <authorList>
            <person name="Almeida R."/>
            <person name="Amado M."/>
            <person name="David L."/>
            <person name="Levery S.B."/>
            <person name="Holmes E.H."/>
            <person name="Merkx G."/>
            <person name="van Kessel A.G."/>
            <person name="Rygaard E."/>
            <person name="Hassan H."/>
            <person name="Bennett E."/>
            <person name="Clausen H."/>
        </authorList>
    </citation>
    <scope>NUCLEOTIDE SEQUENCE [MRNA] (ISOFORM 1)</scope>
    <scope>CATALYTIC ACTIVITY</scope>
    <scope>BIOPHYSICOCHEMICAL PROPERTIES</scope>
    <scope>TISSUE SPECIFICITY</scope>
</reference>
<reference key="2">
    <citation type="journal article" date="1998" name="Glycobiology">
        <title>The expanding beta 4-galactosyltransferase gene family: messages from the databanks.</title>
        <authorList>
            <person name="Lo N.-W."/>
            <person name="Shaper J.H."/>
            <person name="Pevsner J."/>
            <person name="Shaper N.L."/>
        </authorList>
    </citation>
    <scope>NUCLEOTIDE SEQUENCE [MRNA] (ISOFORM 1)</scope>
</reference>
<reference key="3">
    <citation type="journal article" date="2001" name="Glycobiology">
        <title>Galactosylation of N-linked oligosaccharides by human beta-1,4-galactosyltransferases I, II, III, IV, V, and VI expressed in Sf-9 cells.</title>
        <authorList>
            <person name="Guo S."/>
            <person name="Sato T."/>
            <person name="Shirane K."/>
            <person name="Furukawa K."/>
        </authorList>
    </citation>
    <scope>NUCLEOTIDE SEQUENCE [MRNA] (ISOFORM 1)</scope>
    <scope>BIOPHYSICOCHEMICAL PROPERTIES</scope>
    <scope>CATALYTIC ACTIVITY</scope>
    <source>
        <tissue>Erythroleukemia</tissue>
    </source>
</reference>
<reference key="4">
    <citation type="journal article" date="2004" name="Nat. Genet.">
        <title>Complete sequencing and characterization of 21,243 full-length human cDNAs.</title>
        <authorList>
            <person name="Ota T."/>
            <person name="Suzuki Y."/>
            <person name="Nishikawa T."/>
            <person name="Otsuki T."/>
            <person name="Sugiyama T."/>
            <person name="Irie R."/>
            <person name="Wakamatsu A."/>
            <person name="Hayashi K."/>
            <person name="Sato H."/>
            <person name="Nagai K."/>
            <person name="Kimura K."/>
            <person name="Makita H."/>
            <person name="Sekine M."/>
            <person name="Obayashi M."/>
            <person name="Nishi T."/>
            <person name="Shibahara T."/>
            <person name="Tanaka T."/>
            <person name="Ishii S."/>
            <person name="Yamamoto J."/>
            <person name="Saito K."/>
            <person name="Kawai Y."/>
            <person name="Isono Y."/>
            <person name="Nakamura Y."/>
            <person name="Nagahari K."/>
            <person name="Murakami K."/>
            <person name="Yasuda T."/>
            <person name="Iwayanagi T."/>
            <person name="Wagatsuma M."/>
            <person name="Shiratori A."/>
            <person name="Sudo H."/>
            <person name="Hosoiri T."/>
            <person name="Kaku Y."/>
            <person name="Kodaira H."/>
            <person name="Kondo H."/>
            <person name="Sugawara M."/>
            <person name="Takahashi M."/>
            <person name="Kanda K."/>
            <person name="Yokoi T."/>
            <person name="Furuya T."/>
            <person name="Kikkawa E."/>
            <person name="Omura Y."/>
            <person name="Abe K."/>
            <person name="Kamihara K."/>
            <person name="Katsuta N."/>
            <person name="Sato K."/>
            <person name="Tanikawa M."/>
            <person name="Yamazaki M."/>
            <person name="Ninomiya K."/>
            <person name="Ishibashi T."/>
            <person name="Yamashita H."/>
            <person name="Murakawa K."/>
            <person name="Fujimori K."/>
            <person name="Tanai H."/>
            <person name="Kimata M."/>
            <person name="Watanabe M."/>
            <person name="Hiraoka S."/>
            <person name="Chiba Y."/>
            <person name="Ishida S."/>
            <person name="Ono Y."/>
            <person name="Takiguchi S."/>
            <person name="Watanabe S."/>
            <person name="Yosida M."/>
            <person name="Hotuta T."/>
            <person name="Kusano J."/>
            <person name="Kanehori K."/>
            <person name="Takahashi-Fujii A."/>
            <person name="Hara H."/>
            <person name="Tanase T.-O."/>
            <person name="Nomura Y."/>
            <person name="Togiya S."/>
            <person name="Komai F."/>
            <person name="Hara R."/>
            <person name="Takeuchi K."/>
            <person name="Arita M."/>
            <person name="Imose N."/>
            <person name="Musashino K."/>
            <person name="Yuuki H."/>
            <person name="Oshima A."/>
            <person name="Sasaki N."/>
            <person name="Aotsuka S."/>
            <person name="Yoshikawa Y."/>
            <person name="Matsunawa H."/>
            <person name="Ichihara T."/>
            <person name="Shiohata N."/>
            <person name="Sano S."/>
            <person name="Moriya S."/>
            <person name="Momiyama H."/>
            <person name="Satoh N."/>
            <person name="Takami S."/>
            <person name="Terashima Y."/>
            <person name="Suzuki O."/>
            <person name="Nakagawa S."/>
            <person name="Senoh A."/>
            <person name="Mizoguchi H."/>
            <person name="Goto Y."/>
            <person name="Shimizu F."/>
            <person name="Wakebe H."/>
            <person name="Hishigaki H."/>
            <person name="Watanabe T."/>
            <person name="Sugiyama A."/>
            <person name="Takemoto M."/>
            <person name="Kawakami B."/>
            <person name="Yamazaki M."/>
            <person name="Watanabe K."/>
            <person name="Kumagai A."/>
            <person name="Itakura S."/>
            <person name="Fukuzumi Y."/>
            <person name="Fujimori Y."/>
            <person name="Komiyama M."/>
            <person name="Tashiro H."/>
            <person name="Tanigami A."/>
            <person name="Fujiwara T."/>
            <person name="Ono T."/>
            <person name="Yamada K."/>
            <person name="Fujii Y."/>
            <person name="Ozaki K."/>
            <person name="Hirao M."/>
            <person name="Ohmori Y."/>
            <person name="Kawabata A."/>
            <person name="Hikiji T."/>
            <person name="Kobatake N."/>
            <person name="Inagaki H."/>
            <person name="Ikema Y."/>
            <person name="Okamoto S."/>
            <person name="Okitani R."/>
            <person name="Kawakami T."/>
            <person name="Noguchi S."/>
            <person name="Itoh T."/>
            <person name="Shigeta K."/>
            <person name="Senba T."/>
            <person name="Matsumura K."/>
            <person name="Nakajima Y."/>
            <person name="Mizuno T."/>
            <person name="Morinaga M."/>
            <person name="Sasaki M."/>
            <person name="Togashi T."/>
            <person name="Oyama M."/>
            <person name="Hata H."/>
            <person name="Watanabe M."/>
            <person name="Komatsu T."/>
            <person name="Mizushima-Sugano J."/>
            <person name="Satoh T."/>
            <person name="Shirai Y."/>
            <person name="Takahashi Y."/>
            <person name="Nakagawa K."/>
            <person name="Okumura K."/>
            <person name="Nagase T."/>
            <person name="Nomura N."/>
            <person name="Kikuchi H."/>
            <person name="Masuho Y."/>
            <person name="Yamashita R."/>
            <person name="Nakai K."/>
            <person name="Yada T."/>
            <person name="Nakamura Y."/>
            <person name="Ohara O."/>
            <person name="Isogai T."/>
            <person name="Sugano S."/>
        </authorList>
    </citation>
    <scope>NUCLEOTIDE SEQUENCE [LARGE SCALE MRNA] (ISOFORMS 1 AND 3)</scope>
</reference>
<reference key="5">
    <citation type="journal article" date="2006" name="Nature">
        <title>The DNA sequence and biological annotation of human chromosome 1.</title>
        <authorList>
            <person name="Gregory S.G."/>
            <person name="Barlow K.F."/>
            <person name="McLay K.E."/>
            <person name="Kaul R."/>
            <person name="Swarbreck D."/>
            <person name="Dunham A."/>
            <person name="Scott C.E."/>
            <person name="Howe K.L."/>
            <person name="Woodfine K."/>
            <person name="Spencer C.C.A."/>
            <person name="Jones M.C."/>
            <person name="Gillson C."/>
            <person name="Searle S."/>
            <person name="Zhou Y."/>
            <person name="Kokocinski F."/>
            <person name="McDonald L."/>
            <person name="Evans R."/>
            <person name="Phillips K."/>
            <person name="Atkinson A."/>
            <person name="Cooper R."/>
            <person name="Jones C."/>
            <person name="Hall R.E."/>
            <person name="Andrews T.D."/>
            <person name="Lloyd C."/>
            <person name="Ainscough R."/>
            <person name="Almeida J.P."/>
            <person name="Ambrose K.D."/>
            <person name="Anderson F."/>
            <person name="Andrew R.W."/>
            <person name="Ashwell R.I.S."/>
            <person name="Aubin K."/>
            <person name="Babbage A.K."/>
            <person name="Bagguley C.L."/>
            <person name="Bailey J."/>
            <person name="Beasley H."/>
            <person name="Bethel G."/>
            <person name="Bird C.P."/>
            <person name="Bray-Allen S."/>
            <person name="Brown J.Y."/>
            <person name="Brown A.J."/>
            <person name="Buckley D."/>
            <person name="Burton J."/>
            <person name="Bye J."/>
            <person name="Carder C."/>
            <person name="Chapman J.C."/>
            <person name="Clark S.Y."/>
            <person name="Clarke G."/>
            <person name="Clee C."/>
            <person name="Cobley V."/>
            <person name="Collier R.E."/>
            <person name="Corby N."/>
            <person name="Coville G.J."/>
            <person name="Davies J."/>
            <person name="Deadman R."/>
            <person name="Dunn M."/>
            <person name="Earthrowl M."/>
            <person name="Ellington A.G."/>
            <person name="Errington H."/>
            <person name="Frankish A."/>
            <person name="Frankland J."/>
            <person name="French L."/>
            <person name="Garner P."/>
            <person name="Garnett J."/>
            <person name="Gay L."/>
            <person name="Ghori M.R.J."/>
            <person name="Gibson R."/>
            <person name="Gilby L.M."/>
            <person name="Gillett W."/>
            <person name="Glithero R.J."/>
            <person name="Grafham D.V."/>
            <person name="Griffiths C."/>
            <person name="Griffiths-Jones S."/>
            <person name="Grocock R."/>
            <person name="Hammond S."/>
            <person name="Harrison E.S.I."/>
            <person name="Hart E."/>
            <person name="Haugen E."/>
            <person name="Heath P.D."/>
            <person name="Holmes S."/>
            <person name="Holt K."/>
            <person name="Howden P.J."/>
            <person name="Hunt A.R."/>
            <person name="Hunt S.E."/>
            <person name="Hunter G."/>
            <person name="Isherwood J."/>
            <person name="James R."/>
            <person name="Johnson C."/>
            <person name="Johnson D."/>
            <person name="Joy A."/>
            <person name="Kay M."/>
            <person name="Kershaw J.K."/>
            <person name="Kibukawa M."/>
            <person name="Kimberley A.M."/>
            <person name="King A."/>
            <person name="Knights A.J."/>
            <person name="Lad H."/>
            <person name="Laird G."/>
            <person name="Lawlor S."/>
            <person name="Leongamornlert D.A."/>
            <person name="Lloyd D.M."/>
            <person name="Loveland J."/>
            <person name="Lovell J."/>
            <person name="Lush M.J."/>
            <person name="Lyne R."/>
            <person name="Martin S."/>
            <person name="Mashreghi-Mohammadi M."/>
            <person name="Matthews L."/>
            <person name="Matthews N.S.W."/>
            <person name="McLaren S."/>
            <person name="Milne S."/>
            <person name="Mistry S."/>
            <person name="Moore M.J.F."/>
            <person name="Nickerson T."/>
            <person name="O'Dell C.N."/>
            <person name="Oliver K."/>
            <person name="Palmeiri A."/>
            <person name="Palmer S.A."/>
            <person name="Parker A."/>
            <person name="Patel D."/>
            <person name="Pearce A.V."/>
            <person name="Peck A.I."/>
            <person name="Pelan S."/>
            <person name="Phelps K."/>
            <person name="Phillimore B.J."/>
            <person name="Plumb R."/>
            <person name="Rajan J."/>
            <person name="Raymond C."/>
            <person name="Rouse G."/>
            <person name="Saenphimmachak C."/>
            <person name="Sehra H.K."/>
            <person name="Sheridan E."/>
            <person name="Shownkeen R."/>
            <person name="Sims S."/>
            <person name="Skuce C.D."/>
            <person name="Smith M."/>
            <person name="Steward C."/>
            <person name="Subramanian S."/>
            <person name="Sycamore N."/>
            <person name="Tracey A."/>
            <person name="Tromans A."/>
            <person name="Van Helmond Z."/>
            <person name="Wall M."/>
            <person name="Wallis J.M."/>
            <person name="White S."/>
            <person name="Whitehead S.L."/>
            <person name="Wilkinson J.E."/>
            <person name="Willey D.L."/>
            <person name="Williams H."/>
            <person name="Wilming L."/>
            <person name="Wray P.W."/>
            <person name="Wu Z."/>
            <person name="Coulson A."/>
            <person name="Vaudin M."/>
            <person name="Sulston J.E."/>
            <person name="Durbin R.M."/>
            <person name="Hubbard T."/>
            <person name="Wooster R."/>
            <person name="Dunham I."/>
            <person name="Carter N.P."/>
            <person name="McVean G."/>
            <person name="Ross M.T."/>
            <person name="Harrow J."/>
            <person name="Olson M.V."/>
            <person name="Beck S."/>
            <person name="Rogers J."/>
            <person name="Bentley D.R."/>
        </authorList>
    </citation>
    <scope>NUCLEOTIDE SEQUENCE [LARGE SCALE GENOMIC DNA]</scope>
</reference>
<reference key="6">
    <citation type="submission" date="2005-09" db="EMBL/GenBank/DDBJ databases">
        <authorList>
            <person name="Mural R.J."/>
            <person name="Istrail S."/>
            <person name="Sutton G.G."/>
            <person name="Florea L."/>
            <person name="Halpern A.L."/>
            <person name="Mobarry C.M."/>
            <person name="Lippert R."/>
            <person name="Walenz B."/>
            <person name="Shatkay H."/>
            <person name="Dew I."/>
            <person name="Miller J.R."/>
            <person name="Flanigan M.J."/>
            <person name="Edwards N.J."/>
            <person name="Bolanos R."/>
            <person name="Fasulo D."/>
            <person name="Halldorsson B.V."/>
            <person name="Hannenhalli S."/>
            <person name="Turner R."/>
            <person name="Yooseph S."/>
            <person name="Lu F."/>
            <person name="Nusskern D.R."/>
            <person name="Shue B.C."/>
            <person name="Zheng X.H."/>
            <person name="Zhong F."/>
            <person name="Delcher A.L."/>
            <person name="Huson D.H."/>
            <person name="Kravitz S.A."/>
            <person name="Mouchard L."/>
            <person name="Reinert K."/>
            <person name="Remington K.A."/>
            <person name="Clark A.G."/>
            <person name="Waterman M.S."/>
            <person name="Eichler E.E."/>
            <person name="Adams M.D."/>
            <person name="Hunkapiller M.W."/>
            <person name="Myers E.W."/>
            <person name="Venter J.C."/>
        </authorList>
    </citation>
    <scope>NUCLEOTIDE SEQUENCE [LARGE SCALE GENOMIC DNA]</scope>
</reference>
<reference key="7">
    <citation type="journal article" date="2004" name="Genome Res.">
        <title>The status, quality, and expansion of the NIH full-length cDNA project: the Mammalian Gene Collection (MGC).</title>
        <authorList>
            <consortium name="The MGC Project Team"/>
        </authorList>
    </citation>
    <scope>NUCLEOTIDE SEQUENCE [LARGE SCALE MRNA] (ISOFORM 1)</scope>
    <scope>VARIANT HIS-122</scope>
    <source>
        <tissue>Chondrosarcoma</tissue>
    </source>
</reference>
<reference key="8">
    <citation type="journal article" date="2007" name="BMC Genomics">
        <title>The full-ORF clone resource of the German cDNA consortium.</title>
        <authorList>
            <person name="Bechtel S."/>
            <person name="Rosenfelder H."/>
            <person name="Duda A."/>
            <person name="Schmidt C.P."/>
            <person name="Ernst U."/>
            <person name="Wellenreuther R."/>
            <person name="Mehrle A."/>
            <person name="Schuster C."/>
            <person name="Bahr A."/>
            <person name="Bloecker H."/>
            <person name="Heubner D."/>
            <person name="Hoerlein A."/>
            <person name="Michel G."/>
            <person name="Wedler H."/>
            <person name="Koehrer K."/>
            <person name="Ottenwaelder B."/>
            <person name="Poustka A."/>
            <person name="Wiemann S."/>
            <person name="Schupp I."/>
        </authorList>
    </citation>
    <scope>NUCLEOTIDE SEQUENCE [LARGE SCALE MRNA] OF 149-372 (ISOFORMS 1/2)</scope>
    <source>
        <tissue>Uterus</tissue>
    </source>
</reference>
<reference key="9">
    <citation type="journal article" date="1999" name="Biochim. Biophys. Acta">
        <title>Identification and characterization of large galactosyltransferase gene families: galactosyltransferases for all functions.</title>
        <authorList>
            <person name="Amado M."/>
            <person name="Almeida R."/>
            <person name="Schwientek T."/>
            <person name="Clausen H."/>
        </authorList>
    </citation>
    <scope>REVIEW</scope>
</reference>
<protein>
    <recommendedName>
        <fullName evidence="9">Beta-1,4-galactosyltransferase 2</fullName>
        <shortName evidence="8">Beta-1,4-GalTase 2</shortName>
        <shortName>Beta4Gal-T2</shortName>
        <shortName evidence="8">b4Gal-T2</shortName>
        <ecNumber evidence="6">2.4.1.-</ecNumber>
    </recommendedName>
    <alternativeName>
        <fullName>Beta-N-acetylglucosaminyl-glycolipid beta-1,4-galactosyltransferase</fullName>
    </alternativeName>
    <alternativeName>
        <fullName evidence="8">Beta-N-acetylglucosaminylglycopeptide beta-1,4-galactosyltransferase</fullName>
        <ecNumber evidence="6">2.4.1.38</ecNumber>
    </alternativeName>
    <alternativeName>
        <fullName>Lactose synthase A protein</fullName>
        <ecNumber>2.4.1.22</ecNumber>
    </alternativeName>
    <alternativeName>
        <fullName evidence="8">N-acetyllactosamine synthase</fullName>
        <ecNumber evidence="6">2.4.1.90</ecNumber>
    </alternativeName>
    <alternativeName>
        <fullName>Nal synthase</fullName>
    </alternativeName>
    <alternativeName>
        <fullName>UDP-Gal:beta-GlcNAc beta-1,4-galactosyltransferase 2</fullName>
    </alternativeName>
    <alternativeName>
        <fullName>UDP-galactose:beta-N-acetylglucosamine beta-1,4-galactosyltransferase 2</fullName>
    </alternativeName>
</protein>
<gene>
    <name evidence="10" type="primary">B4GALT2</name>
</gene>
<organism>
    <name type="scientific">Homo sapiens</name>
    <name type="common">Human</name>
    <dbReference type="NCBI Taxonomy" id="9606"/>
    <lineage>
        <taxon>Eukaryota</taxon>
        <taxon>Metazoa</taxon>
        <taxon>Chordata</taxon>
        <taxon>Craniata</taxon>
        <taxon>Vertebrata</taxon>
        <taxon>Euteleostomi</taxon>
        <taxon>Mammalia</taxon>
        <taxon>Eutheria</taxon>
        <taxon>Euarchontoglires</taxon>
        <taxon>Primates</taxon>
        <taxon>Haplorrhini</taxon>
        <taxon>Catarrhini</taxon>
        <taxon>Hominidae</taxon>
        <taxon>Homo</taxon>
    </lineage>
</organism>
<dbReference type="EC" id="2.4.1.-" evidence="6"/>
<dbReference type="EC" id="2.4.1.38" evidence="6"/>
<dbReference type="EC" id="2.4.1.22"/>
<dbReference type="EC" id="2.4.1.90" evidence="6"/>
<dbReference type="EMBL" id="Y12510">
    <property type="protein sequence ID" value="CAA73112.1"/>
    <property type="molecule type" value="mRNA"/>
</dbReference>
<dbReference type="EMBL" id="AF038660">
    <property type="protein sequence ID" value="AAC39733.1"/>
    <property type="molecule type" value="mRNA"/>
</dbReference>
<dbReference type="EMBL" id="AB024434">
    <property type="protein sequence ID" value="BAA75819.1"/>
    <property type="molecule type" value="mRNA"/>
</dbReference>
<dbReference type="EMBL" id="AK095873">
    <property type="protein sequence ID" value="BAG53152.1"/>
    <property type="molecule type" value="mRNA"/>
</dbReference>
<dbReference type="EMBL" id="AK293418">
    <property type="protein sequence ID" value="BAG56925.1"/>
    <property type="molecule type" value="mRNA"/>
</dbReference>
<dbReference type="EMBL" id="AL139220">
    <property type="status" value="NOT_ANNOTATED_CDS"/>
    <property type="molecule type" value="Genomic_DNA"/>
</dbReference>
<dbReference type="EMBL" id="AL357079">
    <property type="status" value="NOT_ANNOTATED_CDS"/>
    <property type="molecule type" value="Genomic_DNA"/>
</dbReference>
<dbReference type="EMBL" id="CH471059">
    <property type="protein sequence ID" value="EAX07062.1"/>
    <property type="molecule type" value="Genomic_DNA"/>
</dbReference>
<dbReference type="EMBL" id="CH471059">
    <property type="protein sequence ID" value="EAX07063.1"/>
    <property type="molecule type" value="Genomic_DNA"/>
</dbReference>
<dbReference type="EMBL" id="CH471059">
    <property type="protein sequence ID" value="EAX07064.1"/>
    <property type="molecule type" value="Genomic_DNA"/>
</dbReference>
<dbReference type="EMBL" id="CH471059">
    <property type="protein sequence ID" value="EAX07065.1"/>
    <property type="molecule type" value="Genomic_DNA"/>
</dbReference>
<dbReference type="EMBL" id="BC096821">
    <property type="protein sequence ID" value="AAH96821.1"/>
    <property type="molecule type" value="mRNA"/>
</dbReference>
<dbReference type="EMBL" id="AL137647">
    <property type="protein sequence ID" value="CAB70857.1"/>
    <property type="molecule type" value="mRNA"/>
</dbReference>
<dbReference type="CCDS" id="CCDS506.1">
    <molecule id="O60909-1"/>
</dbReference>
<dbReference type="CCDS" id="CCDS55596.1">
    <molecule id="O60909-3"/>
</dbReference>
<dbReference type="PIR" id="T46511">
    <property type="entry name" value="T46511"/>
</dbReference>
<dbReference type="RefSeq" id="NP_001005417.1">
    <molecule id="O60909-1"/>
    <property type="nucleotide sequence ID" value="NM_001005417.2"/>
</dbReference>
<dbReference type="RefSeq" id="NP_003771.1">
    <molecule id="O60909-1"/>
    <property type="nucleotide sequence ID" value="NM_003780.5"/>
</dbReference>
<dbReference type="RefSeq" id="NP_085076.2">
    <molecule id="O60909-3"/>
    <property type="nucleotide sequence ID" value="NM_030587.3"/>
</dbReference>
<dbReference type="RefSeq" id="XP_016858205.1">
    <molecule id="O60909-1"/>
    <property type="nucleotide sequence ID" value="XM_017002716.1"/>
</dbReference>
<dbReference type="RefSeq" id="XP_016858206.1">
    <molecule id="O60909-1"/>
    <property type="nucleotide sequence ID" value="XM_017002717.2"/>
</dbReference>
<dbReference type="RefSeq" id="XP_054195380.1">
    <molecule id="O60909-1"/>
    <property type="nucleotide sequence ID" value="XM_054339405.1"/>
</dbReference>
<dbReference type="RefSeq" id="XP_054195381.1">
    <molecule id="O60909-1"/>
    <property type="nucleotide sequence ID" value="XM_054339406.1"/>
</dbReference>
<dbReference type="SMR" id="O60909"/>
<dbReference type="BioGRID" id="114247">
    <property type="interactions" value="142"/>
</dbReference>
<dbReference type="FunCoup" id="O60909">
    <property type="interactions" value="1317"/>
</dbReference>
<dbReference type="IntAct" id="O60909">
    <property type="interactions" value="118"/>
</dbReference>
<dbReference type="MINT" id="O60909"/>
<dbReference type="STRING" id="9606.ENSP00000310696"/>
<dbReference type="CAZy" id="GT7">
    <property type="family name" value="Glycosyltransferase Family 7"/>
</dbReference>
<dbReference type="GlyCosmos" id="O60909">
    <property type="glycosylation" value="3 sites, No reported glycans"/>
</dbReference>
<dbReference type="GlyGen" id="O60909">
    <property type="glycosylation" value="5 sites"/>
</dbReference>
<dbReference type="iPTMnet" id="O60909"/>
<dbReference type="PhosphoSitePlus" id="O60909"/>
<dbReference type="SwissPalm" id="O60909"/>
<dbReference type="BioMuta" id="B4GALT2"/>
<dbReference type="jPOST" id="O60909"/>
<dbReference type="MassIVE" id="O60909"/>
<dbReference type="PaxDb" id="9606-ENSP00000310696"/>
<dbReference type="PeptideAtlas" id="O60909"/>
<dbReference type="ProteomicsDB" id="49666">
    <molecule id="O60909-1"/>
</dbReference>
<dbReference type="ProteomicsDB" id="49667">
    <molecule id="O60909-2"/>
</dbReference>
<dbReference type="ProteomicsDB" id="49668">
    <molecule id="O60909-3"/>
</dbReference>
<dbReference type="Antibodypedia" id="32429">
    <property type="antibodies" value="182 antibodies from 26 providers"/>
</dbReference>
<dbReference type="DNASU" id="8704"/>
<dbReference type="Ensembl" id="ENST00000309519.8">
    <molecule id="O60909-3"/>
    <property type="protein sequence ID" value="ENSP00000310696.7"/>
    <property type="gene ID" value="ENSG00000117411.18"/>
</dbReference>
<dbReference type="Ensembl" id="ENST00000356836.10">
    <molecule id="O60909-1"/>
    <property type="protein sequence ID" value="ENSP00000349293.6"/>
    <property type="gene ID" value="ENSG00000117411.18"/>
</dbReference>
<dbReference type="Ensembl" id="ENST00000372324.6">
    <molecule id="O60909-1"/>
    <property type="protein sequence ID" value="ENSP00000361399.1"/>
    <property type="gene ID" value="ENSG00000117411.18"/>
</dbReference>
<dbReference type="Ensembl" id="ENST00000434555.7">
    <molecule id="O60909-1"/>
    <property type="protein sequence ID" value="ENSP00000407468.3"/>
    <property type="gene ID" value="ENSG00000117411.18"/>
</dbReference>
<dbReference type="GeneID" id="8704"/>
<dbReference type="KEGG" id="hsa:8704"/>
<dbReference type="MANE-Select" id="ENST00000372324.6">
    <property type="protein sequence ID" value="ENSP00000361399.1"/>
    <property type="RefSeq nucleotide sequence ID" value="NM_003780.5"/>
    <property type="RefSeq protein sequence ID" value="NP_003771.1"/>
</dbReference>
<dbReference type="UCSC" id="uc001clg.4">
    <molecule id="O60909-1"/>
    <property type="organism name" value="human"/>
</dbReference>
<dbReference type="AGR" id="HGNC:925"/>
<dbReference type="CTD" id="8704"/>
<dbReference type="DisGeNET" id="8704"/>
<dbReference type="GeneCards" id="B4GALT2"/>
<dbReference type="HGNC" id="HGNC:925">
    <property type="gene designation" value="B4GALT2"/>
</dbReference>
<dbReference type="HPA" id="ENSG00000117411">
    <property type="expression patterns" value="Low tissue specificity"/>
</dbReference>
<dbReference type="MIM" id="604013">
    <property type="type" value="gene"/>
</dbReference>
<dbReference type="neXtProt" id="NX_O60909"/>
<dbReference type="OpenTargets" id="ENSG00000117411"/>
<dbReference type="PharmGKB" id="PA25224"/>
<dbReference type="VEuPathDB" id="HostDB:ENSG00000117411"/>
<dbReference type="eggNOG" id="KOG3916">
    <property type="taxonomic scope" value="Eukaryota"/>
</dbReference>
<dbReference type="GeneTree" id="ENSGT00940000159367"/>
<dbReference type="HOGENOM" id="CLU_044391_0_0_1"/>
<dbReference type="InParanoid" id="O60909"/>
<dbReference type="OMA" id="GEQPRHF"/>
<dbReference type="OrthoDB" id="10016069at2759"/>
<dbReference type="PAN-GO" id="O60909">
    <property type="GO annotations" value="3 GO annotations based on evolutionary models"/>
</dbReference>
<dbReference type="PhylomeDB" id="O60909"/>
<dbReference type="TreeFam" id="TF312834"/>
<dbReference type="BioCyc" id="MetaCyc:HS04130-MONOMER"/>
<dbReference type="BRENDA" id="2.4.1.38">
    <property type="organism ID" value="2681"/>
</dbReference>
<dbReference type="BRENDA" id="2.4.1.90">
    <property type="organism ID" value="2681"/>
</dbReference>
<dbReference type="PathwayCommons" id="O60909"/>
<dbReference type="Reactome" id="R-HSA-2022854">
    <property type="pathway name" value="Keratan sulfate biosynthesis"/>
</dbReference>
<dbReference type="Reactome" id="R-HSA-975577">
    <property type="pathway name" value="N-Glycan antennae elongation"/>
</dbReference>
<dbReference type="SABIO-RK" id="O60909"/>
<dbReference type="SignaLink" id="O60909"/>
<dbReference type="UniPathway" id="UPA00378"/>
<dbReference type="BioGRID-ORCS" id="8704">
    <property type="hits" value="21 hits in 1164 CRISPR screens"/>
</dbReference>
<dbReference type="ChiTaRS" id="B4GALT2">
    <property type="organism name" value="human"/>
</dbReference>
<dbReference type="GeneWiki" id="B4GALT2"/>
<dbReference type="GenomeRNAi" id="8704"/>
<dbReference type="Pharos" id="O60909">
    <property type="development level" value="Tbio"/>
</dbReference>
<dbReference type="PRO" id="PR:O60909"/>
<dbReference type="Proteomes" id="UP000005640">
    <property type="component" value="Chromosome 1"/>
</dbReference>
<dbReference type="RNAct" id="O60909">
    <property type="molecule type" value="protein"/>
</dbReference>
<dbReference type="Bgee" id="ENSG00000117411">
    <property type="expression patterns" value="Expressed in cortical plate and 174 other cell types or tissues"/>
</dbReference>
<dbReference type="GO" id="GO:0005794">
    <property type="term" value="C:Golgi apparatus"/>
    <property type="evidence" value="ECO:0000314"/>
    <property type="project" value="HPA"/>
</dbReference>
<dbReference type="GO" id="GO:0032580">
    <property type="term" value="C:Golgi cisterna membrane"/>
    <property type="evidence" value="ECO:0007669"/>
    <property type="project" value="UniProtKB-SubCell"/>
</dbReference>
<dbReference type="GO" id="GO:0000139">
    <property type="term" value="C:Golgi membrane"/>
    <property type="evidence" value="ECO:0000304"/>
    <property type="project" value="Reactome"/>
</dbReference>
<dbReference type="GO" id="GO:0043231">
    <property type="term" value="C:intracellular membrane-bounded organelle"/>
    <property type="evidence" value="ECO:0000314"/>
    <property type="project" value="HPA"/>
</dbReference>
<dbReference type="GO" id="GO:0005654">
    <property type="term" value="C:nucleoplasm"/>
    <property type="evidence" value="ECO:0000314"/>
    <property type="project" value="HPA"/>
</dbReference>
<dbReference type="GO" id="GO:0003831">
    <property type="term" value="F:beta-N-acetylglucosaminylglycopeptide beta-1,4-galactosyltransferase activity"/>
    <property type="evidence" value="ECO:0007669"/>
    <property type="project" value="UniProtKB-EC"/>
</dbReference>
<dbReference type="GO" id="GO:0008378">
    <property type="term" value="F:galactosyltransferase activity"/>
    <property type="evidence" value="ECO:0000318"/>
    <property type="project" value="GO_Central"/>
</dbReference>
<dbReference type="GO" id="GO:0004461">
    <property type="term" value="F:lactose synthase activity"/>
    <property type="evidence" value="ECO:0007669"/>
    <property type="project" value="UniProtKB-EC"/>
</dbReference>
<dbReference type="GO" id="GO:0046872">
    <property type="term" value="F:metal ion binding"/>
    <property type="evidence" value="ECO:0007669"/>
    <property type="project" value="UniProtKB-KW"/>
</dbReference>
<dbReference type="GO" id="GO:0003945">
    <property type="term" value="F:N-acetyllactosamine synthase activity"/>
    <property type="evidence" value="ECO:0007669"/>
    <property type="project" value="UniProtKB-EC"/>
</dbReference>
<dbReference type="GO" id="GO:0005975">
    <property type="term" value="P:carbohydrate metabolic process"/>
    <property type="evidence" value="ECO:0007669"/>
    <property type="project" value="InterPro"/>
</dbReference>
<dbReference type="GO" id="GO:0021680">
    <property type="term" value="P:cerebellar Purkinje cell layer development"/>
    <property type="evidence" value="ECO:0007669"/>
    <property type="project" value="Ensembl"/>
</dbReference>
<dbReference type="GO" id="GO:0070085">
    <property type="term" value="P:glycosylation"/>
    <property type="evidence" value="ECO:0000318"/>
    <property type="project" value="GO_Central"/>
</dbReference>
<dbReference type="GO" id="GO:0007626">
    <property type="term" value="P:locomotory behavior"/>
    <property type="evidence" value="ECO:0007669"/>
    <property type="project" value="Ensembl"/>
</dbReference>
<dbReference type="GO" id="GO:0007613">
    <property type="term" value="P:memory"/>
    <property type="evidence" value="ECO:0007669"/>
    <property type="project" value="Ensembl"/>
</dbReference>
<dbReference type="GO" id="GO:0006486">
    <property type="term" value="P:protein glycosylation"/>
    <property type="evidence" value="ECO:0007669"/>
    <property type="project" value="UniProtKB-UniPathway"/>
</dbReference>
<dbReference type="GO" id="GO:0008542">
    <property type="term" value="P:visual learning"/>
    <property type="evidence" value="ECO:0007669"/>
    <property type="project" value="Ensembl"/>
</dbReference>
<dbReference type="CDD" id="cd00899">
    <property type="entry name" value="b4GalT"/>
    <property type="match status" value="1"/>
</dbReference>
<dbReference type="FunFam" id="3.90.550.10:FF:000028">
    <property type="entry name" value="beta-1,4-galactosyltransferase 1"/>
    <property type="match status" value="1"/>
</dbReference>
<dbReference type="Gene3D" id="3.90.550.10">
    <property type="entry name" value="Spore Coat Polysaccharide Biosynthesis Protein SpsA, Chain A"/>
    <property type="match status" value="1"/>
</dbReference>
<dbReference type="InterPro" id="IPR003859">
    <property type="entry name" value="Galactosyl_T"/>
</dbReference>
<dbReference type="InterPro" id="IPR027791">
    <property type="entry name" value="Galactosyl_T_C"/>
</dbReference>
<dbReference type="InterPro" id="IPR027995">
    <property type="entry name" value="Galactosyl_T_N"/>
</dbReference>
<dbReference type="InterPro" id="IPR029044">
    <property type="entry name" value="Nucleotide-diphossugar_trans"/>
</dbReference>
<dbReference type="PANTHER" id="PTHR19300">
    <property type="entry name" value="BETA-1,4-GALACTOSYLTRANSFERASE"/>
    <property type="match status" value="1"/>
</dbReference>
<dbReference type="PANTHER" id="PTHR19300:SF32">
    <property type="entry name" value="BETA-1,4-GALACTOSYLTRANSFERASE 2"/>
    <property type="match status" value="1"/>
</dbReference>
<dbReference type="Pfam" id="PF02709">
    <property type="entry name" value="Glyco_transf_7C"/>
    <property type="match status" value="1"/>
</dbReference>
<dbReference type="Pfam" id="PF13733">
    <property type="entry name" value="Glyco_transf_7N"/>
    <property type="match status" value="1"/>
</dbReference>
<dbReference type="PRINTS" id="PR02050">
    <property type="entry name" value="B14GALTRFASE"/>
</dbReference>
<dbReference type="SUPFAM" id="SSF53448">
    <property type="entry name" value="Nucleotide-diphospho-sugar transferases"/>
    <property type="match status" value="1"/>
</dbReference>
<sequence length="372" mass="41972">MSRLLGGTLERVCKAVLLLCLLHFLVAVILYFDVYAQHLAFFSRFSARGPAHALHPAASSSSSSSNCSRPNATASSSGLPEVPSALPGPTAPTLPPCPDSPPGLVGRLLIEFTSPMPLERVQRENPGVLMGGRYTPPDCTPAQTVAVIIPFRHREHHLRYWLHYLHPILRRQRLRYGVYVINQHGEDTFNRAKLLNVGFLEALKEDAAYDCFIFSDVDLVPMDDRNLYRCGDQPRHFAIAMDKFGFRLPYAGYFGGVSGLSKAQFLRINGFPNEYWGWGGEDDDIFNRISLTGMKISRPDIRIGRYRMIKHDRDKHNEPNPQRFTKIQNTKLTMKRDGIGSVRYQVLEVSRQPLFTNITVDIGRPPSWPPRG</sequence>